<feature type="chain" id="PRO_1000013385" description="Large ribosomal subunit protein bL34">
    <location>
        <begin position="1"/>
        <end position="44"/>
    </location>
</feature>
<feature type="region of interest" description="Disordered" evidence="2">
    <location>
        <begin position="1"/>
        <end position="27"/>
    </location>
</feature>
<feature type="compositionally biased region" description="Basic residues" evidence="2">
    <location>
        <begin position="11"/>
        <end position="27"/>
    </location>
</feature>
<protein>
    <recommendedName>
        <fullName evidence="1">Large ribosomal subunit protein bL34</fullName>
    </recommendedName>
    <alternativeName>
        <fullName evidence="3">50S ribosomal protein L34</fullName>
    </alternativeName>
</protein>
<evidence type="ECO:0000255" key="1">
    <source>
        <dbReference type="HAMAP-Rule" id="MF_00391"/>
    </source>
</evidence>
<evidence type="ECO:0000256" key="2">
    <source>
        <dbReference type="SAM" id="MobiDB-lite"/>
    </source>
</evidence>
<evidence type="ECO:0000305" key="3"/>
<keyword id="KW-0687">Ribonucleoprotein</keyword>
<keyword id="KW-0689">Ribosomal protein</keyword>
<sequence>MKRTYQPSVISKKRTHGFRARMKTRGGRAVIRARRAKGRVRLSV</sequence>
<reference key="1">
    <citation type="journal article" date="2007" name="Environ. Microbiol.">
        <title>Whole-genome analysis of the ammonia-oxidizing bacterium, Nitrosomonas eutropha C91: implications for niche adaptation.</title>
        <authorList>
            <person name="Stein L.Y."/>
            <person name="Arp D.J."/>
            <person name="Berube P.M."/>
            <person name="Chain P.S."/>
            <person name="Hauser L."/>
            <person name="Jetten M.S."/>
            <person name="Klotz M.G."/>
            <person name="Larimer F.W."/>
            <person name="Norton J.M."/>
            <person name="Op den Camp H.J.M."/>
            <person name="Shin M."/>
            <person name="Wei X."/>
        </authorList>
    </citation>
    <scope>NUCLEOTIDE SEQUENCE [LARGE SCALE GENOMIC DNA]</scope>
    <source>
        <strain>DSM 101675 / C91 / Nm57</strain>
    </source>
</reference>
<gene>
    <name evidence="1" type="primary">rpmH</name>
    <name type="ordered locus">Neut_2151</name>
</gene>
<accession>Q0AE59</accession>
<proteinExistence type="inferred from homology"/>
<name>RL34_NITEC</name>
<dbReference type="EMBL" id="CP000450">
    <property type="protein sequence ID" value="ABI60373.1"/>
    <property type="molecule type" value="Genomic_DNA"/>
</dbReference>
<dbReference type="RefSeq" id="WP_011635170.1">
    <property type="nucleotide sequence ID" value="NC_008344.1"/>
</dbReference>
<dbReference type="SMR" id="Q0AE59"/>
<dbReference type="STRING" id="335283.Neut_2151"/>
<dbReference type="KEGG" id="net:Neut_2151"/>
<dbReference type="eggNOG" id="COG0230">
    <property type="taxonomic scope" value="Bacteria"/>
</dbReference>
<dbReference type="HOGENOM" id="CLU_129938_2_0_4"/>
<dbReference type="Proteomes" id="UP000001966">
    <property type="component" value="Chromosome"/>
</dbReference>
<dbReference type="GO" id="GO:1990904">
    <property type="term" value="C:ribonucleoprotein complex"/>
    <property type="evidence" value="ECO:0007669"/>
    <property type="project" value="UniProtKB-KW"/>
</dbReference>
<dbReference type="GO" id="GO:0005840">
    <property type="term" value="C:ribosome"/>
    <property type="evidence" value="ECO:0007669"/>
    <property type="project" value="UniProtKB-KW"/>
</dbReference>
<dbReference type="GO" id="GO:0003735">
    <property type="term" value="F:structural constituent of ribosome"/>
    <property type="evidence" value="ECO:0007669"/>
    <property type="project" value="InterPro"/>
</dbReference>
<dbReference type="GO" id="GO:0006412">
    <property type="term" value="P:translation"/>
    <property type="evidence" value="ECO:0007669"/>
    <property type="project" value="UniProtKB-UniRule"/>
</dbReference>
<dbReference type="FunFam" id="1.10.287.3980:FF:000001">
    <property type="entry name" value="Mitochondrial ribosomal protein L34"/>
    <property type="match status" value="1"/>
</dbReference>
<dbReference type="Gene3D" id="1.10.287.3980">
    <property type="match status" value="1"/>
</dbReference>
<dbReference type="HAMAP" id="MF_00391">
    <property type="entry name" value="Ribosomal_bL34"/>
    <property type="match status" value="1"/>
</dbReference>
<dbReference type="InterPro" id="IPR000271">
    <property type="entry name" value="Ribosomal_bL34"/>
</dbReference>
<dbReference type="InterPro" id="IPR020939">
    <property type="entry name" value="Ribosomal_bL34_CS"/>
</dbReference>
<dbReference type="NCBIfam" id="TIGR01030">
    <property type="entry name" value="rpmH_bact"/>
    <property type="match status" value="1"/>
</dbReference>
<dbReference type="PANTHER" id="PTHR14503:SF4">
    <property type="entry name" value="LARGE RIBOSOMAL SUBUNIT PROTEIN BL34M"/>
    <property type="match status" value="1"/>
</dbReference>
<dbReference type="PANTHER" id="PTHR14503">
    <property type="entry name" value="MITOCHONDRIAL RIBOSOMAL PROTEIN 34 FAMILY MEMBER"/>
    <property type="match status" value="1"/>
</dbReference>
<dbReference type="Pfam" id="PF00468">
    <property type="entry name" value="Ribosomal_L34"/>
    <property type="match status" value="1"/>
</dbReference>
<dbReference type="PROSITE" id="PS00784">
    <property type="entry name" value="RIBOSOMAL_L34"/>
    <property type="match status" value="1"/>
</dbReference>
<organism>
    <name type="scientific">Nitrosomonas eutropha (strain DSM 101675 / C91 / Nm57)</name>
    <dbReference type="NCBI Taxonomy" id="335283"/>
    <lineage>
        <taxon>Bacteria</taxon>
        <taxon>Pseudomonadati</taxon>
        <taxon>Pseudomonadota</taxon>
        <taxon>Betaproteobacteria</taxon>
        <taxon>Nitrosomonadales</taxon>
        <taxon>Nitrosomonadaceae</taxon>
        <taxon>Nitrosomonas</taxon>
    </lineage>
</organism>
<comment type="similarity">
    <text evidence="1">Belongs to the bacterial ribosomal protein bL34 family.</text>
</comment>